<keyword id="KW-0240">DNA-directed RNA polymerase</keyword>
<keyword id="KW-0548">Nucleotidyltransferase</keyword>
<keyword id="KW-0804">Transcription</keyword>
<keyword id="KW-0808">Transferase</keyword>
<protein>
    <recommendedName>
        <fullName evidence="1">DNA-directed RNA polymerase subunit alpha</fullName>
        <shortName evidence="1">RNAP subunit alpha</shortName>
        <ecNumber evidence="1">2.7.7.6</ecNumber>
    </recommendedName>
    <alternativeName>
        <fullName evidence="1">RNA polymerase subunit alpha</fullName>
    </alternativeName>
    <alternativeName>
        <fullName evidence="1">Transcriptase subunit alpha</fullName>
    </alternativeName>
</protein>
<evidence type="ECO:0000255" key="1">
    <source>
        <dbReference type="HAMAP-Rule" id="MF_00059"/>
    </source>
</evidence>
<comment type="function">
    <text evidence="1">DNA-dependent RNA polymerase catalyzes the transcription of DNA into RNA using the four ribonucleoside triphosphates as substrates.</text>
</comment>
<comment type="catalytic activity">
    <reaction evidence="1">
        <text>RNA(n) + a ribonucleoside 5'-triphosphate = RNA(n+1) + diphosphate</text>
        <dbReference type="Rhea" id="RHEA:21248"/>
        <dbReference type="Rhea" id="RHEA-COMP:14527"/>
        <dbReference type="Rhea" id="RHEA-COMP:17342"/>
        <dbReference type="ChEBI" id="CHEBI:33019"/>
        <dbReference type="ChEBI" id="CHEBI:61557"/>
        <dbReference type="ChEBI" id="CHEBI:140395"/>
        <dbReference type="EC" id="2.7.7.6"/>
    </reaction>
</comment>
<comment type="subunit">
    <text evidence="1">Homodimer. The RNAP catalytic core consists of 2 alpha, 1 beta, 1 beta' and 1 omega subunit. When a sigma factor is associated with the core the holoenzyme is formed, which can initiate transcription.</text>
</comment>
<comment type="domain">
    <text evidence="1">The N-terminal domain is essential for RNAP assembly and basal transcription, whereas the C-terminal domain is involved in interaction with transcriptional regulators and with upstream promoter elements.</text>
</comment>
<comment type="similarity">
    <text evidence="1">Belongs to the RNA polymerase alpha chain family.</text>
</comment>
<dbReference type="EC" id="2.7.7.6" evidence="1"/>
<dbReference type="EMBL" id="FM954972">
    <property type="protein sequence ID" value="CAV20097.1"/>
    <property type="molecule type" value="Genomic_DNA"/>
</dbReference>
<dbReference type="SMR" id="B7VLD2"/>
<dbReference type="STRING" id="575788.VS_2807"/>
<dbReference type="KEGG" id="vsp:VS_2807"/>
<dbReference type="eggNOG" id="COG0202">
    <property type="taxonomic scope" value="Bacteria"/>
</dbReference>
<dbReference type="HOGENOM" id="CLU_053084_0_0_6"/>
<dbReference type="Proteomes" id="UP000009100">
    <property type="component" value="Chromosome 1"/>
</dbReference>
<dbReference type="GO" id="GO:0005737">
    <property type="term" value="C:cytoplasm"/>
    <property type="evidence" value="ECO:0007669"/>
    <property type="project" value="UniProtKB-ARBA"/>
</dbReference>
<dbReference type="GO" id="GO:0000428">
    <property type="term" value="C:DNA-directed RNA polymerase complex"/>
    <property type="evidence" value="ECO:0007669"/>
    <property type="project" value="UniProtKB-KW"/>
</dbReference>
<dbReference type="GO" id="GO:0003677">
    <property type="term" value="F:DNA binding"/>
    <property type="evidence" value="ECO:0007669"/>
    <property type="project" value="UniProtKB-UniRule"/>
</dbReference>
<dbReference type="GO" id="GO:0003899">
    <property type="term" value="F:DNA-directed RNA polymerase activity"/>
    <property type="evidence" value="ECO:0007669"/>
    <property type="project" value="UniProtKB-UniRule"/>
</dbReference>
<dbReference type="GO" id="GO:0046983">
    <property type="term" value="F:protein dimerization activity"/>
    <property type="evidence" value="ECO:0007669"/>
    <property type="project" value="InterPro"/>
</dbReference>
<dbReference type="GO" id="GO:0006351">
    <property type="term" value="P:DNA-templated transcription"/>
    <property type="evidence" value="ECO:0007669"/>
    <property type="project" value="UniProtKB-UniRule"/>
</dbReference>
<dbReference type="CDD" id="cd06928">
    <property type="entry name" value="RNAP_alpha_NTD"/>
    <property type="match status" value="1"/>
</dbReference>
<dbReference type="FunFam" id="1.10.150.20:FF:000001">
    <property type="entry name" value="DNA-directed RNA polymerase subunit alpha"/>
    <property type="match status" value="1"/>
</dbReference>
<dbReference type="FunFam" id="2.170.120.12:FF:000001">
    <property type="entry name" value="DNA-directed RNA polymerase subunit alpha"/>
    <property type="match status" value="1"/>
</dbReference>
<dbReference type="Gene3D" id="1.10.150.20">
    <property type="entry name" value="5' to 3' exonuclease, C-terminal subdomain"/>
    <property type="match status" value="1"/>
</dbReference>
<dbReference type="Gene3D" id="2.170.120.12">
    <property type="entry name" value="DNA-directed RNA polymerase, insert domain"/>
    <property type="match status" value="1"/>
</dbReference>
<dbReference type="Gene3D" id="3.30.1360.10">
    <property type="entry name" value="RNA polymerase, RBP11-like subunit"/>
    <property type="match status" value="1"/>
</dbReference>
<dbReference type="HAMAP" id="MF_00059">
    <property type="entry name" value="RNApol_bact_RpoA"/>
    <property type="match status" value="1"/>
</dbReference>
<dbReference type="InterPro" id="IPR011262">
    <property type="entry name" value="DNA-dir_RNA_pol_insert"/>
</dbReference>
<dbReference type="InterPro" id="IPR011263">
    <property type="entry name" value="DNA-dir_RNA_pol_RpoA/D/Rpb3"/>
</dbReference>
<dbReference type="InterPro" id="IPR011773">
    <property type="entry name" value="DNA-dir_RpoA"/>
</dbReference>
<dbReference type="InterPro" id="IPR036603">
    <property type="entry name" value="RBP11-like"/>
</dbReference>
<dbReference type="InterPro" id="IPR011260">
    <property type="entry name" value="RNAP_asu_C"/>
</dbReference>
<dbReference type="InterPro" id="IPR036643">
    <property type="entry name" value="RNApol_insert_sf"/>
</dbReference>
<dbReference type="NCBIfam" id="NF003513">
    <property type="entry name" value="PRK05182.1-2"/>
    <property type="match status" value="1"/>
</dbReference>
<dbReference type="NCBIfam" id="NF003519">
    <property type="entry name" value="PRK05182.2-5"/>
    <property type="match status" value="1"/>
</dbReference>
<dbReference type="NCBIfam" id="TIGR02027">
    <property type="entry name" value="rpoA"/>
    <property type="match status" value="1"/>
</dbReference>
<dbReference type="Pfam" id="PF01000">
    <property type="entry name" value="RNA_pol_A_bac"/>
    <property type="match status" value="1"/>
</dbReference>
<dbReference type="Pfam" id="PF03118">
    <property type="entry name" value="RNA_pol_A_CTD"/>
    <property type="match status" value="1"/>
</dbReference>
<dbReference type="Pfam" id="PF01193">
    <property type="entry name" value="RNA_pol_L"/>
    <property type="match status" value="1"/>
</dbReference>
<dbReference type="SMART" id="SM00662">
    <property type="entry name" value="RPOLD"/>
    <property type="match status" value="1"/>
</dbReference>
<dbReference type="SUPFAM" id="SSF47789">
    <property type="entry name" value="C-terminal domain of RNA polymerase alpha subunit"/>
    <property type="match status" value="1"/>
</dbReference>
<dbReference type="SUPFAM" id="SSF56553">
    <property type="entry name" value="Insert subdomain of RNA polymerase alpha subunit"/>
    <property type="match status" value="1"/>
</dbReference>
<dbReference type="SUPFAM" id="SSF55257">
    <property type="entry name" value="RBP11-like subunits of RNA polymerase"/>
    <property type="match status" value="1"/>
</dbReference>
<sequence>MQGSVTEFLKPRLVDIEQINTTHAKVTLEPLERGFGHTLGNALRRILLSSMPGCAVTEVEIEGVLHEYSTKEGVQEDILEILLNLKGLAVRVAEGKDEVFITLNKSGSGPVVAGDITHDGDVEIANPEHVICHLTDDNAEIAMRIKVERGRGYVPASARIHTEEDERPIGRLLVDATYSPVDKIAYAVEAARVEQRTDLDKLVIDMETNGTLEPEEAIRRAATILAEQLDAFVDLRDVRVPEEKEEKPEFDPILLRPVDDLELTVRSANCLKAEAIHYIGDLVQRTEVELLKTPNLGKKSLTEIKDVLASRGLSLGMRLENWPPASIAED</sequence>
<gene>
    <name evidence="1" type="primary">rpoA</name>
    <name type="ordered locus">VS_2807</name>
</gene>
<feature type="chain" id="PRO_1000196650" description="DNA-directed RNA polymerase subunit alpha">
    <location>
        <begin position="1"/>
        <end position="330"/>
    </location>
</feature>
<feature type="region of interest" description="Alpha N-terminal domain (alpha-NTD)" evidence="1">
    <location>
        <begin position="1"/>
        <end position="236"/>
    </location>
</feature>
<feature type="region of interest" description="Alpha C-terminal domain (alpha-CTD)" evidence="1">
    <location>
        <begin position="250"/>
        <end position="330"/>
    </location>
</feature>
<accession>B7VLD2</accession>
<reference key="1">
    <citation type="submission" date="2009-02" db="EMBL/GenBank/DDBJ databases">
        <title>Vibrio splendidus str. LGP32 complete genome.</title>
        <authorList>
            <person name="Mazel D."/>
            <person name="Le Roux F."/>
        </authorList>
    </citation>
    <scope>NUCLEOTIDE SEQUENCE [LARGE SCALE GENOMIC DNA]</scope>
    <source>
        <strain>LGP32</strain>
    </source>
</reference>
<organism>
    <name type="scientific">Vibrio atlanticus (strain LGP32)</name>
    <name type="common">Vibrio splendidus (strain Mel32)</name>
    <dbReference type="NCBI Taxonomy" id="575788"/>
    <lineage>
        <taxon>Bacteria</taxon>
        <taxon>Pseudomonadati</taxon>
        <taxon>Pseudomonadota</taxon>
        <taxon>Gammaproteobacteria</taxon>
        <taxon>Vibrionales</taxon>
        <taxon>Vibrionaceae</taxon>
        <taxon>Vibrio</taxon>
    </lineage>
</organism>
<proteinExistence type="inferred from homology"/>
<name>RPOA_VIBA3</name>